<gene>
    <name evidence="1" type="primary">gltX</name>
    <name type="ordered locus">Ctha_2685</name>
</gene>
<comment type="function">
    <text evidence="1">Catalyzes the attachment of glutamate to tRNA(Glu) in a two-step reaction: glutamate is first activated by ATP to form Glu-AMP and then transferred to the acceptor end of tRNA(Glu).</text>
</comment>
<comment type="catalytic activity">
    <reaction evidence="1">
        <text>tRNA(Glu) + L-glutamate + ATP = L-glutamyl-tRNA(Glu) + AMP + diphosphate</text>
        <dbReference type="Rhea" id="RHEA:23540"/>
        <dbReference type="Rhea" id="RHEA-COMP:9663"/>
        <dbReference type="Rhea" id="RHEA-COMP:9680"/>
        <dbReference type="ChEBI" id="CHEBI:29985"/>
        <dbReference type="ChEBI" id="CHEBI:30616"/>
        <dbReference type="ChEBI" id="CHEBI:33019"/>
        <dbReference type="ChEBI" id="CHEBI:78442"/>
        <dbReference type="ChEBI" id="CHEBI:78520"/>
        <dbReference type="ChEBI" id="CHEBI:456215"/>
        <dbReference type="EC" id="6.1.1.17"/>
    </reaction>
</comment>
<comment type="subunit">
    <text evidence="1">Monomer.</text>
</comment>
<comment type="subcellular location">
    <subcellularLocation>
        <location evidence="1">Cytoplasm</location>
    </subcellularLocation>
</comment>
<comment type="similarity">
    <text evidence="1">Belongs to the class-I aminoacyl-tRNA synthetase family. Glutamate--tRNA ligase type 1 subfamily.</text>
</comment>
<proteinExistence type="inferred from homology"/>
<organism>
    <name type="scientific">Chloroherpeton thalassium (strain ATCC 35110 / GB-78)</name>
    <dbReference type="NCBI Taxonomy" id="517418"/>
    <lineage>
        <taxon>Bacteria</taxon>
        <taxon>Pseudomonadati</taxon>
        <taxon>Chlorobiota</taxon>
        <taxon>Chlorobiia</taxon>
        <taxon>Chlorobiales</taxon>
        <taxon>Chloroherpetonaceae</taxon>
        <taxon>Chloroherpeton</taxon>
    </lineage>
</organism>
<name>SYE_CHLT3</name>
<protein>
    <recommendedName>
        <fullName evidence="1">Glutamate--tRNA ligase</fullName>
        <ecNumber evidence="1">6.1.1.17</ecNumber>
    </recommendedName>
    <alternativeName>
        <fullName evidence="1">Glutamyl-tRNA synthetase</fullName>
        <shortName evidence="1">GluRS</shortName>
    </alternativeName>
</protein>
<accession>B3QYR1</accession>
<keyword id="KW-0030">Aminoacyl-tRNA synthetase</keyword>
<keyword id="KW-0067">ATP-binding</keyword>
<keyword id="KW-0963">Cytoplasm</keyword>
<keyword id="KW-0436">Ligase</keyword>
<keyword id="KW-0547">Nucleotide-binding</keyword>
<keyword id="KW-0648">Protein biosynthesis</keyword>
<keyword id="KW-1185">Reference proteome</keyword>
<reference key="1">
    <citation type="submission" date="2008-06" db="EMBL/GenBank/DDBJ databases">
        <title>Complete sequence of Chloroherpeton thalassium ATCC 35110.</title>
        <authorList>
            <consortium name="US DOE Joint Genome Institute"/>
            <person name="Lucas S."/>
            <person name="Copeland A."/>
            <person name="Lapidus A."/>
            <person name="Glavina del Rio T."/>
            <person name="Dalin E."/>
            <person name="Tice H."/>
            <person name="Bruce D."/>
            <person name="Goodwin L."/>
            <person name="Pitluck S."/>
            <person name="Schmutz J."/>
            <person name="Larimer F."/>
            <person name="Land M."/>
            <person name="Hauser L."/>
            <person name="Kyrpides N."/>
            <person name="Mikhailova N."/>
            <person name="Liu Z."/>
            <person name="Li T."/>
            <person name="Zhao F."/>
            <person name="Overmann J."/>
            <person name="Bryant D.A."/>
            <person name="Richardson P."/>
        </authorList>
    </citation>
    <scope>NUCLEOTIDE SEQUENCE [LARGE SCALE GENOMIC DNA]</scope>
    <source>
        <strain>ATCC 35110 / GB-78</strain>
    </source>
</reference>
<feature type="chain" id="PRO_1000090064" description="Glutamate--tRNA ligase">
    <location>
        <begin position="1"/>
        <end position="503"/>
    </location>
</feature>
<feature type="short sequence motif" description="'HIGH' region" evidence="1">
    <location>
        <begin position="12"/>
        <end position="22"/>
    </location>
</feature>
<feature type="short sequence motif" description="'KMSKS' region" evidence="1">
    <location>
        <begin position="259"/>
        <end position="263"/>
    </location>
</feature>
<feature type="binding site" evidence="1">
    <location>
        <position position="262"/>
    </location>
    <ligand>
        <name>ATP</name>
        <dbReference type="ChEBI" id="CHEBI:30616"/>
    </ligand>
</feature>
<evidence type="ECO:0000255" key="1">
    <source>
        <dbReference type="HAMAP-Rule" id="MF_00022"/>
    </source>
</evidence>
<dbReference type="EC" id="6.1.1.17" evidence="1"/>
<dbReference type="EMBL" id="CP001100">
    <property type="protein sequence ID" value="ACF15134.1"/>
    <property type="molecule type" value="Genomic_DNA"/>
</dbReference>
<dbReference type="RefSeq" id="WP_012501216.1">
    <property type="nucleotide sequence ID" value="NC_011026.1"/>
</dbReference>
<dbReference type="SMR" id="B3QYR1"/>
<dbReference type="STRING" id="517418.Ctha_2685"/>
<dbReference type="KEGG" id="cts:Ctha_2685"/>
<dbReference type="eggNOG" id="COG0008">
    <property type="taxonomic scope" value="Bacteria"/>
</dbReference>
<dbReference type="HOGENOM" id="CLU_015768_6_3_10"/>
<dbReference type="OrthoDB" id="9807503at2"/>
<dbReference type="Proteomes" id="UP000001208">
    <property type="component" value="Chromosome"/>
</dbReference>
<dbReference type="GO" id="GO:0005737">
    <property type="term" value="C:cytoplasm"/>
    <property type="evidence" value="ECO:0007669"/>
    <property type="project" value="UniProtKB-SubCell"/>
</dbReference>
<dbReference type="GO" id="GO:0005524">
    <property type="term" value="F:ATP binding"/>
    <property type="evidence" value="ECO:0007669"/>
    <property type="project" value="UniProtKB-UniRule"/>
</dbReference>
<dbReference type="GO" id="GO:0004818">
    <property type="term" value="F:glutamate-tRNA ligase activity"/>
    <property type="evidence" value="ECO:0007669"/>
    <property type="project" value="UniProtKB-UniRule"/>
</dbReference>
<dbReference type="GO" id="GO:0000049">
    <property type="term" value="F:tRNA binding"/>
    <property type="evidence" value="ECO:0007669"/>
    <property type="project" value="InterPro"/>
</dbReference>
<dbReference type="GO" id="GO:0008270">
    <property type="term" value="F:zinc ion binding"/>
    <property type="evidence" value="ECO:0007669"/>
    <property type="project" value="InterPro"/>
</dbReference>
<dbReference type="GO" id="GO:0006424">
    <property type="term" value="P:glutamyl-tRNA aminoacylation"/>
    <property type="evidence" value="ECO:0007669"/>
    <property type="project" value="UniProtKB-UniRule"/>
</dbReference>
<dbReference type="CDD" id="cd00808">
    <property type="entry name" value="GluRS_core"/>
    <property type="match status" value="1"/>
</dbReference>
<dbReference type="FunFam" id="3.40.50.620:FF:000045">
    <property type="entry name" value="Glutamate--tRNA ligase, mitochondrial"/>
    <property type="match status" value="1"/>
</dbReference>
<dbReference type="Gene3D" id="1.10.10.350">
    <property type="match status" value="1"/>
</dbReference>
<dbReference type="Gene3D" id="3.40.50.620">
    <property type="entry name" value="HUPs"/>
    <property type="match status" value="1"/>
</dbReference>
<dbReference type="HAMAP" id="MF_00022">
    <property type="entry name" value="Glu_tRNA_synth_type1"/>
    <property type="match status" value="1"/>
</dbReference>
<dbReference type="InterPro" id="IPR045462">
    <property type="entry name" value="aa-tRNA-synth_I_cd-bd"/>
</dbReference>
<dbReference type="InterPro" id="IPR020751">
    <property type="entry name" value="aa-tRNA-synth_I_codon-bd_sub2"/>
</dbReference>
<dbReference type="InterPro" id="IPR001412">
    <property type="entry name" value="aa-tRNA-synth_I_CS"/>
</dbReference>
<dbReference type="InterPro" id="IPR008925">
    <property type="entry name" value="aa_tRNA-synth_I_cd-bd_sf"/>
</dbReference>
<dbReference type="InterPro" id="IPR004527">
    <property type="entry name" value="Glu-tRNA-ligase_bac/mito"/>
</dbReference>
<dbReference type="InterPro" id="IPR000924">
    <property type="entry name" value="Glu/Gln-tRNA-synth"/>
</dbReference>
<dbReference type="InterPro" id="IPR020058">
    <property type="entry name" value="Glu/Gln-tRNA-synth_Ib_cat-dom"/>
</dbReference>
<dbReference type="InterPro" id="IPR049940">
    <property type="entry name" value="GluQ/Sye"/>
</dbReference>
<dbReference type="InterPro" id="IPR033910">
    <property type="entry name" value="GluRS_core"/>
</dbReference>
<dbReference type="InterPro" id="IPR014729">
    <property type="entry name" value="Rossmann-like_a/b/a_fold"/>
</dbReference>
<dbReference type="NCBIfam" id="TIGR00464">
    <property type="entry name" value="gltX_bact"/>
    <property type="match status" value="1"/>
</dbReference>
<dbReference type="PANTHER" id="PTHR43311">
    <property type="entry name" value="GLUTAMATE--TRNA LIGASE"/>
    <property type="match status" value="1"/>
</dbReference>
<dbReference type="PANTHER" id="PTHR43311:SF2">
    <property type="entry name" value="GLUTAMATE--TRNA LIGASE, MITOCHONDRIAL-RELATED"/>
    <property type="match status" value="1"/>
</dbReference>
<dbReference type="Pfam" id="PF19269">
    <property type="entry name" value="Anticodon_2"/>
    <property type="match status" value="1"/>
</dbReference>
<dbReference type="Pfam" id="PF00749">
    <property type="entry name" value="tRNA-synt_1c"/>
    <property type="match status" value="1"/>
</dbReference>
<dbReference type="PRINTS" id="PR00987">
    <property type="entry name" value="TRNASYNTHGLU"/>
</dbReference>
<dbReference type="SUPFAM" id="SSF48163">
    <property type="entry name" value="An anticodon-binding domain of class I aminoacyl-tRNA synthetases"/>
    <property type="match status" value="1"/>
</dbReference>
<dbReference type="SUPFAM" id="SSF52374">
    <property type="entry name" value="Nucleotidylyl transferase"/>
    <property type="match status" value="1"/>
</dbReference>
<dbReference type="PROSITE" id="PS00178">
    <property type="entry name" value="AA_TRNA_LIGASE_I"/>
    <property type="match status" value="1"/>
</dbReference>
<sequence>MSEQTIRTRFAPSPTGYLHVGGLRTALYNFLFAKKNGGQFLLRLEDTDRARLVEGAVENLLSSLEWAGIIPDESPKHGGDFGPYVQSERLDIYKQYVQQLLDEKKAYYCFATPDELEESRQLQIKQGVQPKYNRKWLPEDMGGSMPQSEIQKRLDAGEPCVIRMKIPDHTRIRHDDIIRGIVWFDSSTVDDQVLMKSDGFPTYHLASVVDDHLMNITHVIRGEEWLSSTPKHLLLYDFFGWEKPEFAHLPLLLNPDRSKLSKRQGDVAVEDYMAKGYSKDALVNFVALLGWNEGEGVEQEVYSMNELIEKFTLEKVGKSGAVFNVEKLNWIQKQHLKLVSHEDLAKQAKAILVEKLKERESMMPSEKITDDAYLLNVVELMHDRVNFVHEFVTFSEYFFFEPEAYEEAAIKKRWKENTNDLLSEFKGILAGLDNFNSAAIEEALAKYAELKGVKNAALIHPIRLAVSGVSFGPSLYHLMEVIGKEACLRRIERAVDKLDYQEA</sequence>